<organism>
    <name type="scientific">Xenopus tropicalis</name>
    <name type="common">Western clawed frog</name>
    <name type="synonym">Silurana tropicalis</name>
    <dbReference type="NCBI Taxonomy" id="8364"/>
    <lineage>
        <taxon>Eukaryota</taxon>
        <taxon>Metazoa</taxon>
        <taxon>Chordata</taxon>
        <taxon>Craniata</taxon>
        <taxon>Vertebrata</taxon>
        <taxon>Euteleostomi</taxon>
        <taxon>Amphibia</taxon>
        <taxon>Batrachia</taxon>
        <taxon>Anura</taxon>
        <taxon>Pipoidea</taxon>
        <taxon>Pipidae</taxon>
        <taxon>Xenopodinae</taxon>
        <taxon>Xenopus</taxon>
        <taxon>Silurana</taxon>
    </lineage>
</organism>
<gene>
    <name type="primary">lgr5</name>
</gene>
<name>LGR5_XENTR</name>
<accession>F7D3V9</accession>
<keyword id="KW-1003">Cell membrane</keyword>
<keyword id="KW-1015">Disulfide bond</keyword>
<keyword id="KW-0297">G-protein coupled receptor</keyword>
<keyword id="KW-0325">Glycoprotein</keyword>
<keyword id="KW-0333">Golgi apparatus</keyword>
<keyword id="KW-0433">Leucine-rich repeat</keyword>
<keyword id="KW-0472">Membrane</keyword>
<keyword id="KW-0675">Receptor</keyword>
<keyword id="KW-1185">Reference proteome</keyword>
<keyword id="KW-0677">Repeat</keyword>
<keyword id="KW-0732">Signal</keyword>
<keyword id="KW-0807">Transducer</keyword>
<keyword id="KW-0812">Transmembrane</keyword>
<keyword id="KW-1133">Transmembrane helix</keyword>
<feature type="signal peptide" evidence="2">
    <location>
        <begin position="1"/>
        <end position="22"/>
    </location>
</feature>
<feature type="chain" id="PRO_0000422820" description="Leucine-rich repeat-containing G-protein coupled receptor 5">
    <location>
        <begin position="23"/>
        <end position="902"/>
    </location>
</feature>
<feature type="topological domain" description="Extracellular" evidence="2">
    <location>
        <begin position="23"/>
        <end position="558"/>
    </location>
</feature>
<feature type="transmembrane region" description="Helical; Name=1" evidence="2">
    <location>
        <begin position="559"/>
        <end position="579"/>
    </location>
</feature>
<feature type="topological domain" description="Cytoplasmic" evidence="2">
    <location>
        <begin position="580"/>
        <end position="589"/>
    </location>
</feature>
<feature type="transmembrane region" description="Helical; Name=2" evidence="2">
    <location>
        <begin position="590"/>
        <end position="610"/>
    </location>
</feature>
<feature type="topological domain" description="Extracellular" evidence="2">
    <location>
        <begin position="611"/>
        <end position="634"/>
    </location>
</feature>
<feature type="transmembrane region" description="Helical; Name=3" evidence="2">
    <location>
        <begin position="635"/>
        <end position="655"/>
    </location>
</feature>
<feature type="topological domain" description="Cytoplasmic" evidence="2">
    <location>
        <begin position="656"/>
        <end position="678"/>
    </location>
</feature>
<feature type="transmembrane region" description="Helical; Name=4" evidence="2">
    <location>
        <begin position="679"/>
        <end position="699"/>
    </location>
</feature>
<feature type="topological domain" description="Extracellular" evidence="2">
    <location>
        <begin position="700"/>
        <end position="718"/>
    </location>
</feature>
<feature type="transmembrane region" description="Helical; Name=5" evidence="2">
    <location>
        <begin position="719"/>
        <end position="739"/>
    </location>
</feature>
<feature type="topological domain" description="Cytoplasmic" evidence="2">
    <location>
        <begin position="740"/>
        <end position="763"/>
    </location>
</feature>
<feature type="transmembrane region" description="Helical; Name=6" evidence="2">
    <location>
        <begin position="764"/>
        <end position="784"/>
    </location>
</feature>
<feature type="topological domain" description="Extracellular" evidence="2">
    <location>
        <begin position="785"/>
        <end position="798"/>
    </location>
</feature>
<feature type="transmembrane region" description="Helical; Name=7" evidence="2">
    <location>
        <begin position="799"/>
        <end position="819"/>
    </location>
</feature>
<feature type="topological domain" description="Cytoplasmic" evidence="2">
    <location>
        <begin position="820"/>
        <end position="902"/>
    </location>
</feature>
<feature type="domain" description="LRRNT">
    <location>
        <begin position="32"/>
        <end position="61"/>
    </location>
</feature>
<feature type="repeat" description="LRR 1">
    <location>
        <begin position="41"/>
        <end position="61"/>
    </location>
</feature>
<feature type="repeat" description="LRR 2">
    <location>
        <begin position="62"/>
        <end position="85"/>
    </location>
</feature>
<feature type="repeat" description="LRR 3">
    <location>
        <begin position="86"/>
        <end position="109"/>
    </location>
</feature>
<feature type="repeat" description="LRR 4">
    <location>
        <begin position="111"/>
        <end position="133"/>
    </location>
</feature>
<feature type="repeat" description="LRR 5">
    <location>
        <begin position="134"/>
        <end position="157"/>
    </location>
</feature>
<feature type="repeat" description="LRR 6">
    <location>
        <begin position="159"/>
        <end position="181"/>
    </location>
</feature>
<feature type="repeat" description="LRR 7">
    <location>
        <begin position="182"/>
        <end position="205"/>
    </location>
</feature>
<feature type="repeat" description="LRR 8">
    <location>
        <begin position="207"/>
        <end position="229"/>
    </location>
</feature>
<feature type="repeat" description="LRR 9">
    <location>
        <begin position="230"/>
        <end position="253"/>
    </location>
</feature>
<feature type="repeat" description="LRR 10">
    <location>
        <begin position="254"/>
        <end position="276"/>
    </location>
</feature>
<feature type="repeat" description="LRR 11">
    <location>
        <begin position="278"/>
        <end position="300"/>
    </location>
</feature>
<feature type="repeat" description="LRR 12">
    <location>
        <begin position="302"/>
        <end position="324"/>
    </location>
</feature>
<feature type="repeat" description="LRR 13">
    <location>
        <begin position="325"/>
        <end position="347"/>
    </location>
</feature>
<feature type="repeat" description="LRR 14">
    <location>
        <begin position="348"/>
        <end position="372"/>
    </location>
</feature>
<feature type="repeat" description="LRR 15">
    <location>
        <begin position="374"/>
        <end position="393"/>
    </location>
</feature>
<feature type="repeat" description="LRR 16">
    <location>
        <begin position="394"/>
        <end position="417"/>
    </location>
</feature>
<feature type="repeat" description="LRR 17">
    <location>
        <begin position="418"/>
        <end position="441"/>
    </location>
</feature>
<feature type="repeat" description="LRR 18">
    <location>
        <begin position="598"/>
        <end position="619"/>
    </location>
</feature>
<feature type="glycosylation site" description="N-linked (GlcNAc...) asparagine" evidence="2">
    <location>
        <position position="60"/>
    </location>
</feature>
<feature type="glycosylation site" description="N-linked (GlcNAc...) asparagine" evidence="2">
    <location>
        <position position="74"/>
    </location>
</feature>
<feature type="glycosylation site" description="N-linked (GlcNAc...) asparagine" evidence="2">
    <location>
        <position position="205"/>
    </location>
</feature>
<feature type="glycosylation site" description="N-linked (GlcNAc...) asparagine" evidence="2">
    <location>
        <position position="496"/>
    </location>
</feature>
<feature type="glycosylation site" description="N-linked (GlcNAc...) asparagine" evidence="2">
    <location>
        <position position="788"/>
    </location>
</feature>
<feature type="glycosylation site" description="N-linked (GlcNAc...) asparagine" evidence="2">
    <location>
        <position position="797"/>
    </location>
</feature>
<feature type="disulfide bond" evidence="3">
    <location>
        <begin position="32"/>
        <end position="38"/>
    </location>
</feature>
<feature type="disulfide bond" evidence="3">
    <location>
        <begin position="36"/>
        <end position="49"/>
    </location>
</feature>
<feature type="disulfide bond" evidence="3">
    <location>
        <begin position="345"/>
        <end position="370"/>
    </location>
</feature>
<feature type="disulfide bond" evidence="3">
    <location>
        <begin position="476"/>
        <end position="537"/>
    </location>
</feature>
<feature type="disulfide bond" evidence="3">
    <location>
        <begin position="633"/>
        <end position="708"/>
    </location>
</feature>
<protein>
    <recommendedName>
        <fullName>Leucine-rich repeat-containing G-protein coupled receptor 5</fullName>
    </recommendedName>
</protein>
<comment type="function">
    <text evidence="4">Receptor for R-spondins that potentiates the canonical Wnt signaling pathway and acts as a stem cell marker of the intestinal epithelium and the hair follicle. Upon binding to R-spondins (RSPO1, RSPO2, RSPO3 or RSPO4), associates with phosphorylated LRP6 and frizzled receptors that are activated by extracellular Wnt receptors, triggering the canonical Wnt signaling pathway to increase expression of target genes. In contrast to classical G-protein coupled receptors, does not activate heterotrimeric G-proteins to transduce the signal. Involved in the development and/or maintenance of the adult intestinal stem cells during postembryonic development.</text>
</comment>
<comment type="subcellular location">
    <subcellularLocation>
        <location evidence="1">Cell membrane</location>
        <topology evidence="1">Multi-pass membrane protein</topology>
    </subcellularLocation>
    <subcellularLocation>
        <location evidence="1">Golgi apparatus</location>
        <location evidence="1">trans-Golgi network membrane</location>
        <topology evidence="1">Multi-pass membrane protein</topology>
    </subcellularLocation>
    <text evidence="1">Rapidly and constitutively internalized to the trans-Golgi network at steady state.</text>
</comment>
<comment type="developmental stage">
    <text evidence="4">Maternally and zygotically expressed. Zygotic expression increases after gastrula stage. Expressed predominantly in the endoderm.</text>
</comment>
<comment type="similarity">
    <text evidence="3">Belongs to the G-protein coupled receptor 1 family.</text>
</comment>
<proteinExistence type="evidence at transcript level"/>
<reference key="1">
    <citation type="journal article" date="2010" name="Science">
        <title>The genome of the Western clawed frog Xenopus tropicalis.</title>
        <authorList>
            <person name="Hellsten U."/>
            <person name="Harland R.M."/>
            <person name="Gilchrist M.J."/>
            <person name="Hendrix D."/>
            <person name="Jurka J."/>
            <person name="Kapitonov V."/>
            <person name="Ovcharenko I."/>
            <person name="Putnam N.H."/>
            <person name="Shu S."/>
            <person name="Taher L."/>
            <person name="Blitz I.L."/>
            <person name="Blumberg B."/>
            <person name="Dichmann D.S."/>
            <person name="Dubchak I."/>
            <person name="Amaya E."/>
            <person name="Detter J.C."/>
            <person name="Fletcher R."/>
            <person name="Gerhard D.S."/>
            <person name="Goodstein D."/>
            <person name="Graves T."/>
            <person name="Grigoriev I.V."/>
            <person name="Grimwood J."/>
            <person name="Kawashima T."/>
            <person name="Lindquist E."/>
            <person name="Lucas S.M."/>
            <person name="Mead P.E."/>
            <person name="Mitros T."/>
            <person name="Ogino H."/>
            <person name="Ohta Y."/>
            <person name="Poliakov A.V."/>
            <person name="Pollet N."/>
            <person name="Robert J."/>
            <person name="Salamov A."/>
            <person name="Sater A.K."/>
            <person name="Schmutz J."/>
            <person name="Terry A."/>
            <person name="Vize P.D."/>
            <person name="Warren W.C."/>
            <person name="Wells D."/>
            <person name="Wills A."/>
            <person name="Wilson R.K."/>
            <person name="Zimmerman L.B."/>
            <person name="Zorn A.M."/>
            <person name="Grainger R."/>
            <person name="Grammer T."/>
            <person name="Khokha M.K."/>
            <person name="Richardson P.M."/>
            <person name="Rokhsar D.S."/>
        </authorList>
    </citation>
    <scope>NUCLEOTIDE SEQUENCE [LARGE SCALE GENOMIC DNA]</scope>
</reference>
<reference key="2">
    <citation type="journal article" date="2011" name="EMBO Rep.">
        <title>LGR4 and LGR5 are R-spondin receptors mediating Wnt/beta-catenin and Wnt/PCP signalling.</title>
        <authorList>
            <person name="Glinka A."/>
            <person name="Dolde C."/>
            <person name="Kirsch N."/>
            <person name="Huang Y.L."/>
            <person name="Kazanskaya O."/>
            <person name="Ingelfinger D."/>
            <person name="Boutros M."/>
            <person name="Cruciat C.M."/>
            <person name="Niehrs C."/>
        </authorList>
    </citation>
    <scope>FUNCTION</scope>
    <scope>DEVELOPMENTAL STAGE</scope>
</reference>
<sequence>MDTSKTSFFLFSVLCSLQLVGAARPGKQQRSCPTPCECEQEGMLVRVDCSDRALTSLPRNLSIFTSYLDLSMNNITNLPSNVMHNLHFLEELRLAGNDLTYIPKGAFAGLGSLKVLMLQNNLLRQVPSEALHNLRSLQSLRLDANHISYVPPSSFNGLFSLRHLWLDDNSLTEIPVRALESLSALQAMTLALNKIHHIPDYAFRNLSSLVVLHLHNNRIYSLGKKCFDGLHSLETLDLNYNNLDEFPAAIKTLKNLKELGFHSNNIKSIPEQAFIGNPSLITIHFYDNPIQHVGRSAFQHLPELRTLILNGASQITEFPDLTGTTSLESLTLTGAQLVYLPSAVCTQLPNLQVLDLSYNHIKDLPSFSGCQRLQKIDLRHNEVYEIRSTTFQQLVGLRSLDLAWNKIAVIHPNSFSSLPSLIKLDLSSNHLTSFPVTGLHGLTHLKLTGNSALQDLIPSEHFPKLRVMEMPYAYQCCAFAVCDNLKHSGQMNKDENSSADDFYRKDIGLLHLQDDRDFEDFLLDFEEDVKVLHSVQCTPSAGPFKPCDHLFGSWLTRTGVWLIVLLSFVCNALVIATVFRPLSYVPSIKLLIGLIAIMNTLMGLSSGVLATVDALTFGNFAQYGAWWESGVGCQITGFLSVFAAETSIFLLTVAALERGFSIKCTTKFETKSSFINVKLSIVFCFLLSIVIAVSPLLSGSTYGTSPLCFPLLFGDPSSMGFMVALVLLNSLCFLVMTIAYTKLYCSLEKGELENIWDCSMVKHIALLLFTNCILYCPVAFLSFSSLLNLTFISPEVNKSILLLIIPLPACLNPLLYILFNPHFKEDIGSLKNGDILWSRSRQTSLASVSSEDAEKQSCDSTQALVTFANSSISYDLPATSSSSSYQMTNNYKLSAVAFVPCH</sequence>
<evidence type="ECO:0000250" key="1"/>
<evidence type="ECO:0000255" key="2"/>
<evidence type="ECO:0000255" key="3">
    <source>
        <dbReference type="PROSITE-ProRule" id="PRU00521"/>
    </source>
</evidence>
<evidence type="ECO:0000269" key="4">
    <source>
    </source>
</evidence>
<dbReference type="EMBL" id="AAMC01100607">
    <property type="status" value="NOT_ANNOTATED_CDS"/>
    <property type="molecule type" value="Genomic_DNA"/>
</dbReference>
<dbReference type="EMBL" id="AAMC01100608">
    <property type="status" value="NOT_ANNOTATED_CDS"/>
    <property type="molecule type" value="Genomic_DNA"/>
</dbReference>
<dbReference type="EMBL" id="AAMC01100609">
    <property type="status" value="NOT_ANNOTATED_CDS"/>
    <property type="molecule type" value="Genomic_DNA"/>
</dbReference>
<dbReference type="EMBL" id="AAMC01100610">
    <property type="status" value="NOT_ANNOTATED_CDS"/>
    <property type="molecule type" value="Genomic_DNA"/>
</dbReference>
<dbReference type="RefSeq" id="XP_002940219.2">
    <property type="nucleotide sequence ID" value="XM_002940173.5"/>
</dbReference>
<dbReference type="SMR" id="F7D3V9"/>
<dbReference type="FunCoup" id="F7D3V9">
    <property type="interactions" value="1064"/>
</dbReference>
<dbReference type="STRING" id="8364.ENSXETP00000007354"/>
<dbReference type="GlyCosmos" id="F7D3V9">
    <property type="glycosylation" value="6 sites, No reported glycans"/>
</dbReference>
<dbReference type="PaxDb" id="8364-ENSXETP00000060193"/>
<dbReference type="GeneID" id="100486389"/>
<dbReference type="KEGG" id="xtr:100486389"/>
<dbReference type="AGR" id="Xenbase:XB-GENE-994091"/>
<dbReference type="CTD" id="8549"/>
<dbReference type="Xenbase" id="XB-GENE-994091">
    <property type="gene designation" value="lgr5"/>
</dbReference>
<dbReference type="eggNOG" id="KOG0619">
    <property type="taxonomic scope" value="Eukaryota"/>
</dbReference>
<dbReference type="eggNOG" id="KOG2087">
    <property type="taxonomic scope" value="Eukaryota"/>
</dbReference>
<dbReference type="InParanoid" id="F7D3V9"/>
<dbReference type="OMA" id="PSSMGFM"/>
<dbReference type="OrthoDB" id="1883493at2759"/>
<dbReference type="TreeFam" id="TF316814"/>
<dbReference type="Reactome" id="R-XTR-4641263">
    <property type="pathway name" value="Regulation of FZD by ubiquitination"/>
</dbReference>
<dbReference type="Proteomes" id="UP000008143">
    <property type="component" value="Chromosome 3"/>
</dbReference>
<dbReference type="Bgee" id="ENSXETG00000032366">
    <property type="expression patterns" value="Expressed in 2-cell stage embryo and 6 other cell types or tissues"/>
</dbReference>
<dbReference type="GO" id="GO:0005886">
    <property type="term" value="C:plasma membrane"/>
    <property type="evidence" value="ECO:0000250"/>
    <property type="project" value="UniProtKB"/>
</dbReference>
<dbReference type="GO" id="GO:0032588">
    <property type="term" value="C:trans-Golgi network membrane"/>
    <property type="evidence" value="ECO:0000250"/>
    <property type="project" value="UniProtKB"/>
</dbReference>
<dbReference type="GO" id="GO:0016500">
    <property type="term" value="F:protein-hormone receptor activity"/>
    <property type="evidence" value="ECO:0007669"/>
    <property type="project" value="InterPro"/>
</dbReference>
<dbReference type="GO" id="GO:0004888">
    <property type="term" value="F:transmembrane signaling receptor activity"/>
    <property type="evidence" value="ECO:0000250"/>
    <property type="project" value="UniProtKB"/>
</dbReference>
<dbReference type="GO" id="GO:0007186">
    <property type="term" value="P:G protein-coupled receptor signaling pathway"/>
    <property type="evidence" value="ECO:0007669"/>
    <property type="project" value="UniProtKB-KW"/>
</dbReference>
<dbReference type="GO" id="GO:0090263">
    <property type="term" value="P:positive regulation of canonical Wnt signaling pathway"/>
    <property type="evidence" value="ECO:0000250"/>
    <property type="project" value="UniProtKB"/>
</dbReference>
<dbReference type="FunFam" id="1.20.1070.10:FF:000028">
    <property type="entry name" value="leucine-rich repeat-containing G-protein coupled receptor 4 isoform X1"/>
    <property type="match status" value="1"/>
</dbReference>
<dbReference type="FunFam" id="3.80.10.10:FF:000028">
    <property type="entry name" value="leucine-rich repeat-containing G-protein coupled receptor 4 isoform X1"/>
    <property type="match status" value="1"/>
</dbReference>
<dbReference type="Gene3D" id="1.20.1070.10">
    <property type="entry name" value="Rhodopsin 7-helix transmembrane proteins"/>
    <property type="match status" value="1"/>
</dbReference>
<dbReference type="Gene3D" id="3.80.10.10">
    <property type="entry name" value="Ribonuclease Inhibitor"/>
    <property type="match status" value="1"/>
</dbReference>
<dbReference type="InterPro" id="IPR000276">
    <property type="entry name" value="GPCR_Rhodpsn"/>
</dbReference>
<dbReference type="InterPro" id="IPR017452">
    <property type="entry name" value="GPCR_Rhodpsn_7TM"/>
</dbReference>
<dbReference type="InterPro" id="IPR002131">
    <property type="entry name" value="Gphrmn_rcpt_fam"/>
</dbReference>
<dbReference type="InterPro" id="IPR001611">
    <property type="entry name" value="Leu-rich_rpt"/>
</dbReference>
<dbReference type="InterPro" id="IPR003591">
    <property type="entry name" value="Leu-rich_rpt_typical-subtyp"/>
</dbReference>
<dbReference type="InterPro" id="IPR032675">
    <property type="entry name" value="LRR_dom_sf"/>
</dbReference>
<dbReference type="InterPro" id="IPR000372">
    <property type="entry name" value="LRRNT"/>
</dbReference>
<dbReference type="PANTHER" id="PTHR24372:SF77">
    <property type="entry name" value="G-PROTEIN COUPLED RECEPTORS FAMILY 1 PROFILE DOMAIN-CONTAINING PROTEIN"/>
    <property type="match status" value="1"/>
</dbReference>
<dbReference type="PANTHER" id="PTHR24372">
    <property type="entry name" value="GLYCOPROTEIN HORMONE RECEPTOR"/>
    <property type="match status" value="1"/>
</dbReference>
<dbReference type="Pfam" id="PF00001">
    <property type="entry name" value="7tm_1"/>
    <property type="match status" value="1"/>
</dbReference>
<dbReference type="Pfam" id="PF13516">
    <property type="entry name" value="LRR_6"/>
    <property type="match status" value="1"/>
</dbReference>
<dbReference type="Pfam" id="PF13855">
    <property type="entry name" value="LRR_8"/>
    <property type="match status" value="4"/>
</dbReference>
<dbReference type="PRINTS" id="PR00373">
    <property type="entry name" value="GLYCHORMONER"/>
</dbReference>
<dbReference type="PRINTS" id="PR00237">
    <property type="entry name" value="GPCRRHODOPSN"/>
</dbReference>
<dbReference type="SMART" id="SM00364">
    <property type="entry name" value="LRR_BAC"/>
    <property type="match status" value="7"/>
</dbReference>
<dbReference type="SMART" id="SM00365">
    <property type="entry name" value="LRR_SD22"/>
    <property type="match status" value="5"/>
</dbReference>
<dbReference type="SMART" id="SM00369">
    <property type="entry name" value="LRR_TYP"/>
    <property type="match status" value="15"/>
</dbReference>
<dbReference type="SMART" id="SM00013">
    <property type="entry name" value="LRRNT"/>
    <property type="match status" value="1"/>
</dbReference>
<dbReference type="SUPFAM" id="SSF81321">
    <property type="entry name" value="Family A G protein-coupled receptor-like"/>
    <property type="match status" value="1"/>
</dbReference>
<dbReference type="SUPFAM" id="SSF52058">
    <property type="entry name" value="L domain-like"/>
    <property type="match status" value="2"/>
</dbReference>
<dbReference type="PROSITE" id="PS50262">
    <property type="entry name" value="G_PROTEIN_RECEP_F1_2"/>
    <property type="match status" value="1"/>
</dbReference>
<dbReference type="PROSITE" id="PS51450">
    <property type="entry name" value="LRR"/>
    <property type="match status" value="15"/>
</dbReference>